<keyword id="KW-0067">ATP-binding</keyword>
<keyword id="KW-0963">Cytoplasm</keyword>
<keyword id="KW-0436">Ligase</keyword>
<keyword id="KW-0547">Nucleotide-binding</keyword>
<keyword id="KW-1185">Reference proteome</keyword>
<keyword id="KW-0819">tRNA processing</keyword>
<sequence length="415" mass="46508">MRFYKIISFMLLGLDDTDSPDGMCTTYLGALIANELKRRGFTVTNHRLVRLNPNVIWKTRGNAGISLEISGGDSTVVFEIACEFVERFARFECEKTNPGVVVVESPPDPAFYYQALQRFCTIEETVKRLERIGALYKGYKNGRGLIGALAAVSSVLPDKTYECLAYRKNEVLGTPRIYAEEGFFTSEEQTAPHTWDTVDFIRREIVCVPHGKDPVLYGIRGDTPKWAIKATGFLETEEPAFSQIWETNQGTDAHLLPLPDGGPIEGESYRFSGVVESLPITNRGGHVQFTILSNGMEIPVFAFEPTKYFRNAVRELVVGDEITICGSFQKGVLHLEKFRPNLLATQKSRSSPRCPICGGRMTSAGKDKGYKCRECSGKVRDVPDQERTLQTKWYEVPPGSRRHLAKPAVRMKDDI</sequence>
<gene>
    <name evidence="1" type="primary">tiaS</name>
    <name type="ordered locus">Mlab_0159</name>
</gene>
<protein>
    <recommendedName>
        <fullName evidence="1">tRNA(Ile2) 2-agmatinylcytidine synthetase TiaS</fullName>
        <shortName evidence="1">tRNA(Ile2)-agm2C synthetase</shortName>
        <ecNumber evidence="1">6.3.4.22</ecNumber>
    </recommendedName>
    <alternativeName>
        <fullName evidence="1">tRNA(Ile2) agmatidine synthetase</fullName>
    </alternativeName>
</protein>
<organism>
    <name type="scientific">Methanocorpusculum labreanum (strain ATCC 43576 / DSM 4855 / Z)</name>
    <dbReference type="NCBI Taxonomy" id="410358"/>
    <lineage>
        <taxon>Archaea</taxon>
        <taxon>Methanobacteriati</taxon>
        <taxon>Methanobacteriota</taxon>
        <taxon>Stenosarchaea group</taxon>
        <taxon>Methanomicrobia</taxon>
        <taxon>Methanomicrobiales</taxon>
        <taxon>Methanocorpusculaceae</taxon>
        <taxon>Methanocorpusculum</taxon>
    </lineage>
</organism>
<proteinExistence type="inferred from homology"/>
<accession>A2SPT0</accession>
<comment type="function">
    <text evidence="1">ATP-dependent agmatine transferase that catalyzes the formation of 2-agmatinylcytidine (agm2C) at the wobble position (C34) of tRNA(Ile2), converting the codon specificity from AUG to AUA.</text>
</comment>
<comment type="catalytic activity">
    <reaction evidence="1">
        <text>cytidine(34) in tRNA(Ile2) + agmatine + ATP + H2O = 2-agmatinylcytidine(34) in tRNA(Ile2) + AMP + 2 phosphate + 2 H(+)</text>
        <dbReference type="Rhea" id="RHEA:43608"/>
        <dbReference type="Rhea" id="RHEA-COMP:10625"/>
        <dbReference type="Rhea" id="RHEA-COMP:10626"/>
        <dbReference type="ChEBI" id="CHEBI:15377"/>
        <dbReference type="ChEBI" id="CHEBI:15378"/>
        <dbReference type="ChEBI" id="CHEBI:30616"/>
        <dbReference type="ChEBI" id="CHEBI:43474"/>
        <dbReference type="ChEBI" id="CHEBI:58145"/>
        <dbReference type="ChEBI" id="CHEBI:82748"/>
        <dbReference type="ChEBI" id="CHEBI:83545"/>
        <dbReference type="ChEBI" id="CHEBI:456215"/>
        <dbReference type="EC" id="6.3.4.22"/>
    </reaction>
</comment>
<comment type="subcellular location">
    <subcellularLocation>
        <location evidence="1">Cytoplasm</location>
    </subcellularLocation>
</comment>
<comment type="similarity">
    <text evidence="1">Belongs to the TiaS family.</text>
</comment>
<evidence type="ECO:0000255" key="1">
    <source>
        <dbReference type="HAMAP-Rule" id="MF_01892"/>
    </source>
</evidence>
<reference key="1">
    <citation type="journal article" date="2009" name="Stand. Genomic Sci.">
        <title>Complete genome sequence of Methanocorpusculum labreanum type strain Z.</title>
        <authorList>
            <person name="Anderson I.J."/>
            <person name="Sieprawska-Lupa M."/>
            <person name="Goltsman E."/>
            <person name="Lapidus A."/>
            <person name="Copeland A."/>
            <person name="Glavina Del Rio T."/>
            <person name="Tice H."/>
            <person name="Dalin E."/>
            <person name="Barry K."/>
            <person name="Pitluck S."/>
            <person name="Hauser L."/>
            <person name="Land M."/>
            <person name="Lucas S."/>
            <person name="Richardson P."/>
            <person name="Whitman W.B."/>
            <person name="Kyrpides N.C."/>
        </authorList>
    </citation>
    <scope>NUCLEOTIDE SEQUENCE [LARGE SCALE GENOMIC DNA]</scope>
    <source>
        <strain>ATCC 43576 / DSM 4855 / Z</strain>
    </source>
</reference>
<feature type="chain" id="PRO_0000407296" description="tRNA(Ile2) 2-agmatinylcytidine synthetase TiaS">
    <location>
        <begin position="1"/>
        <end position="415"/>
    </location>
</feature>
<dbReference type="EC" id="6.3.4.22" evidence="1"/>
<dbReference type="EMBL" id="CP000559">
    <property type="protein sequence ID" value="ABN06336.1"/>
    <property type="molecule type" value="Genomic_DNA"/>
</dbReference>
<dbReference type="SMR" id="A2SPT0"/>
<dbReference type="STRING" id="410358.Mlab_0159"/>
<dbReference type="KEGG" id="mla:Mlab_0159"/>
<dbReference type="eggNOG" id="arCOG01115">
    <property type="taxonomic scope" value="Archaea"/>
</dbReference>
<dbReference type="HOGENOM" id="CLU_675459_0_0_2"/>
<dbReference type="OrthoDB" id="39189at2157"/>
<dbReference type="Proteomes" id="UP000000365">
    <property type="component" value="Chromosome"/>
</dbReference>
<dbReference type="GO" id="GO:0005737">
    <property type="term" value="C:cytoplasm"/>
    <property type="evidence" value="ECO:0007669"/>
    <property type="project" value="UniProtKB-SubCell"/>
</dbReference>
<dbReference type="GO" id="GO:0005524">
    <property type="term" value="F:ATP binding"/>
    <property type="evidence" value="ECO:0007669"/>
    <property type="project" value="UniProtKB-KW"/>
</dbReference>
<dbReference type="GO" id="GO:0016879">
    <property type="term" value="F:ligase activity, forming carbon-nitrogen bonds"/>
    <property type="evidence" value="ECO:0007669"/>
    <property type="project" value="UniProtKB-UniRule"/>
</dbReference>
<dbReference type="GO" id="GO:0002101">
    <property type="term" value="P:tRNA wobble cytosine modification"/>
    <property type="evidence" value="ECO:0007669"/>
    <property type="project" value="UniProtKB-UniRule"/>
</dbReference>
<dbReference type="CDD" id="cd04482">
    <property type="entry name" value="RPA2_OBF_like"/>
    <property type="match status" value="1"/>
</dbReference>
<dbReference type="Gene3D" id="2.40.50.1010">
    <property type="match status" value="1"/>
</dbReference>
<dbReference type="Gene3D" id="3.30.70.2200">
    <property type="match status" value="1"/>
</dbReference>
<dbReference type="Gene3D" id="3.90.600.20">
    <property type="match status" value="1"/>
</dbReference>
<dbReference type="HAMAP" id="MF_01892">
    <property type="entry name" value="tRNA_Ile2_agm2C_synt"/>
    <property type="match status" value="1"/>
</dbReference>
<dbReference type="InterPro" id="IPR053870">
    <property type="entry name" value="TiaS-like_TCKD"/>
</dbReference>
<dbReference type="InterPro" id="IPR013696">
    <property type="entry name" value="TiaS_FLD"/>
</dbReference>
<dbReference type="InterPro" id="IPR024913">
    <property type="entry name" value="tRNA_Ile2__agm2C_synt"/>
</dbReference>
<dbReference type="InterPro" id="IPR055394">
    <property type="entry name" value="Zn_ribbon_TiaS"/>
</dbReference>
<dbReference type="PANTHER" id="PTHR40705">
    <property type="entry name" value="TRNA(ILE2) 2-AGMATINYLCYTIDINE SYNTHETASE TIAS"/>
    <property type="match status" value="1"/>
</dbReference>
<dbReference type="PANTHER" id="PTHR40705:SF1">
    <property type="entry name" value="TRNA(ILE2) 2-AGMATINYLCYTIDINE SYNTHETASE TIAS"/>
    <property type="match status" value="1"/>
</dbReference>
<dbReference type="Pfam" id="PF08489">
    <property type="entry name" value="TiaS_FLD"/>
    <property type="match status" value="1"/>
</dbReference>
<dbReference type="Pfam" id="PF22641">
    <property type="entry name" value="TiaS_TCKD"/>
    <property type="match status" value="1"/>
</dbReference>
<dbReference type="Pfam" id="PF23783">
    <property type="entry name" value="Zn_ribbon_TiaS"/>
    <property type="match status" value="1"/>
</dbReference>
<name>TIAS_METLZ</name>